<comment type="subcellular location">
    <subcellularLocation>
        <location evidence="3">Secreted</location>
    </subcellularLocation>
</comment>
<comment type="tissue specificity">
    <text evidence="3">Expressed by the venom duct.</text>
</comment>
<comment type="domain">
    <text evidence="3">The cysteine framework is XIV (C-C-C-C).</text>
</comment>
<comment type="PTM">
    <text evidence="3">Contains 2 disulfide bonds.</text>
</comment>
<reference key="1">
    <citation type="journal article" date="2010" name="Mol. Phylogenet. Evol.">
        <title>Evolution of Conus peptide toxins: analysis of Conus californicus Reeve, 1844.</title>
        <authorList>
            <person name="Biggs J.S."/>
            <person name="Watkins M."/>
            <person name="Puillandre N."/>
            <person name="Ownby J.P."/>
            <person name="Lopez-Vera E."/>
            <person name="Christensen S."/>
            <person name="Moreno K.J."/>
            <person name="Bernaldez J."/>
            <person name="Licea-Navarro A."/>
            <person name="Corneli P.S."/>
            <person name="Olivera B.M."/>
        </authorList>
    </citation>
    <scope>NUCLEOTIDE SEQUENCE [GENOMIC DNA]</scope>
</reference>
<organism>
    <name type="scientific">Californiconus californicus</name>
    <name type="common">California cone</name>
    <name type="synonym">Conus californicus</name>
    <dbReference type="NCBI Taxonomy" id="1736779"/>
    <lineage>
        <taxon>Eukaryota</taxon>
        <taxon>Metazoa</taxon>
        <taxon>Spiralia</taxon>
        <taxon>Lophotrochozoa</taxon>
        <taxon>Mollusca</taxon>
        <taxon>Gastropoda</taxon>
        <taxon>Caenogastropoda</taxon>
        <taxon>Neogastropoda</taxon>
        <taxon>Conoidea</taxon>
        <taxon>Conidae</taxon>
        <taxon>Californiconus</taxon>
    </lineage>
</organism>
<keyword id="KW-0027">Amidation</keyword>
<keyword id="KW-1015">Disulfide bond</keyword>
<keyword id="KW-0528">Neurotoxin</keyword>
<keyword id="KW-0964">Secreted</keyword>
<keyword id="KW-0800">Toxin</keyword>
<name>CUE5_CONCL</name>
<dbReference type="EMBL" id="FJ959136">
    <property type="protein sequence ID" value="ADB93106.1"/>
    <property type="molecule type" value="Genomic_DNA"/>
</dbReference>
<dbReference type="ConoServer" id="4021">
    <property type="toxin name" value="Cal14.5 precursor"/>
</dbReference>
<dbReference type="GO" id="GO:0005576">
    <property type="term" value="C:extracellular region"/>
    <property type="evidence" value="ECO:0007669"/>
    <property type="project" value="UniProtKB-SubCell"/>
</dbReference>
<dbReference type="GO" id="GO:0090729">
    <property type="term" value="F:toxin activity"/>
    <property type="evidence" value="ECO:0007669"/>
    <property type="project" value="UniProtKB-KW"/>
</dbReference>
<accession>D6C4J4</accession>
<protein>
    <recommendedName>
        <fullName evidence="2">Conotoxin Cl14.5</fullName>
    </recommendedName>
</protein>
<proteinExistence type="inferred from homology"/>
<feature type="propeptide" id="PRO_0000415022" evidence="1">
    <location>
        <begin position="1"/>
        <end position="16"/>
    </location>
</feature>
<feature type="peptide" id="PRO_0000415023" description="Conotoxin Cl14.5" evidence="4">
    <location>
        <begin position="18"/>
        <end position="38"/>
    </location>
</feature>
<feature type="modified residue" description="Proline amide" evidence="3">
    <location>
        <position position="38"/>
    </location>
</feature>
<feature type="non-terminal residue" evidence="4">
    <location>
        <position position="1"/>
    </location>
</feature>
<evidence type="ECO:0000250" key="1"/>
<evidence type="ECO:0000303" key="2">
    <source>
    </source>
</evidence>
<evidence type="ECO:0000305" key="3"/>
<evidence type="ECO:0000305" key="4">
    <source>
    </source>
</evidence>
<sequence length="39" mass="4081">PVNEAGVERLFRALVGRGCPADCPNTCDSSNECSPNFPG</sequence>